<proteinExistence type="evidence at transcript level"/>
<dbReference type="EMBL" id="BC146027">
    <property type="protein sequence ID" value="AAI46028.1"/>
    <property type="molecule type" value="mRNA"/>
</dbReference>
<dbReference type="RefSeq" id="NP_001092361.1">
    <property type="nucleotide sequence ID" value="NM_001098891.1"/>
</dbReference>
<dbReference type="SMR" id="A6H6W9"/>
<dbReference type="FunCoup" id="A6H6W9">
    <property type="interactions" value="4095"/>
</dbReference>
<dbReference type="STRING" id="9913.ENSBTAP00000057091"/>
<dbReference type="PaxDb" id="9913-ENSBTAP00000026327"/>
<dbReference type="Ensembl" id="ENSBTAT00000026327.6">
    <property type="protein sequence ID" value="ENSBTAP00000026327.6"/>
    <property type="gene ID" value="ENSBTAG00000019757.6"/>
</dbReference>
<dbReference type="GeneID" id="506646"/>
<dbReference type="KEGG" id="bta:506646"/>
<dbReference type="CTD" id="64426"/>
<dbReference type="VGNC" id="VGNC:35460">
    <property type="gene designation" value="SUDS3"/>
</dbReference>
<dbReference type="eggNOG" id="KOG4466">
    <property type="taxonomic scope" value="Eukaryota"/>
</dbReference>
<dbReference type="GeneTree" id="ENSGT00910000144281"/>
<dbReference type="HOGENOM" id="CLU_050862_0_1_1"/>
<dbReference type="InParanoid" id="A6H6W9"/>
<dbReference type="OrthoDB" id="70376at2759"/>
<dbReference type="TreeFam" id="TF323740"/>
<dbReference type="Proteomes" id="UP000009136">
    <property type="component" value="Chromosome 17"/>
</dbReference>
<dbReference type="GO" id="GO:0005829">
    <property type="term" value="C:cytosol"/>
    <property type="evidence" value="ECO:0007669"/>
    <property type="project" value="Ensembl"/>
</dbReference>
<dbReference type="GO" id="GO:0016604">
    <property type="term" value="C:nuclear body"/>
    <property type="evidence" value="ECO:0007669"/>
    <property type="project" value="Ensembl"/>
</dbReference>
<dbReference type="GO" id="GO:0005634">
    <property type="term" value="C:nucleus"/>
    <property type="evidence" value="ECO:0000250"/>
    <property type="project" value="UniProtKB"/>
</dbReference>
<dbReference type="GO" id="GO:0070822">
    <property type="term" value="C:Sin3-type complex"/>
    <property type="evidence" value="ECO:0000318"/>
    <property type="project" value="GO_Central"/>
</dbReference>
<dbReference type="GO" id="GO:0004407">
    <property type="term" value="F:histone deacetylase activity"/>
    <property type="evidence" value="ECO:0007669"/>
    <property type="project" value="Ensembl"/>
</dbReference>
<dbReference type="GO" id="GO:0042826">
    <property type="term" value="F:histone deacetylase binding"/>
    <property type="evidence" value="ECO:0000318"/>
    <property type="project" value="GO_Central"/>
</dbReference>
<dbReference type="GO" id="GO:0006915">
    <property type="term" value="P:apoptotic process"/>
    <property type="evidence" value="ECO:0007669"/>
    <property type="project" value="UniProtKB-KW"/>
</dbReference>
<dbReference type="GO" id="GO:0006338">
    <property type="term" value="P:chromatin remodeling"/>
    <property type="evidence" value="ECO:0000250"/>
    <property type="project" value="UniProtKB"/>
</dbReference>
<dbReference type="GO" id="GO:0000122">
    <property type="term" value="P:negative regulation of transcription by RNA polymerase II"/>
    <property type="evidence" value="ECO:0000318"/>
    <property type="project" value="GO_Central"/>
</dbReference>
<dbReference type="InterPro" id="IPR013907">
    <property type="entry name" value="Sds3"/>
</dbReference>
<dbReference type="PANTHER" id="PTHR21964">
    <property type="entry name" value="BREAST CANCER METASTASIS-SUPPRESSOR 1"/>
    <property type="match status" value="1"/>
</dbReference>
<dbReference type="Pfam" id="PF08598">
    <property type="entry name" value="Sds3"/>
    <property type="match status" value="1"/>
</dbReference>
<dbReference type="SMART" id="SM01401">
    <property type="entry name" value="Sds3"/>
    <property type="match status" value="1"/>
</dbReference>
<sequence length="328" mass="38133">MSAAALLAPAPAPAGAPPAPEYYPEEDEELESAEDDERSCRGRESDEDTEDASETDLAKHDEEDFVEMKEQMYQDKLASLKRQLQQLQEGTLQEYQKRMKKLDQQYKERIRNAELFLQLETEQVERNYIKEKKAAVKEFEDKKVELKENLIAELEEKKKMIENEKLTMELTGDSMEVKPIMTRKLRRRPNDPVPIPDKRRKPAPAQLNYLLTDEQIMEDLRTLNKLKSPKRPASPSSPEHLPTTPAESPAQRFEARIEDGKLYYDKRWYHKSQAIYLESKDNQKLSCVISSVGANEIWVRKTSDSTKMRIYLGQLQRGLFVIRRRSAA</sequence>
<keyword id="KW-0007">Acetylation</keyword>
<keyword id="KW-0053">Apoptosis</keyword>
<keyword id="KW-0156">Chromatin regulator</keyword>
<keyword id="KW-0175">Coiled coil</keyword>
<keyword id="KW-1017">Isopeptide bond</keyword>
<keyword id="KW-0539">Nucleus</keyword>
<keyword id="KW-0597">Phosphoprotein</keyword>
<keyword id="KW-1185">Reference proteome</keyword>
<keyword id="KW-0678">Repressor</keyword>
<keyword id="KW-0804">Transcription</keyword>
<keyword id="KW-0805">Transcription regulation</keyword>
<keyword id="KW-0832">Ubl conjugation</keyword>
<feature type="initiator methionine" description="Removed" evidence="2">
    <location>
        <position position="1"/>
    </location>
</feature>
<feature type="chain" id="PRO_0000326141" description="Sin3 histone deacetylase corepressor complex component SDS3">
    <location>
        <begin position="2"/>
        <end position="328"/>
    </location>
</feature>
<feature type="region of interest" description="Disordered" evidence="4">
    <location>
        <begin position="1"/>
        <end position="64"/>
    </location>
</feature>
<feature type="region of interest" description="Mediates interaction with USP17L2" evidence="1">
    <location>
        <begin position="2"/>
        <end position="170"/>
    </location>
</feature>
<feature type="region of interest" description="Disordered" evidence="4">
    <location>
        <begin position="226"/>
        <end position="252"/>
    </location>
</feature>
<feature type="coiled-coil region" evidence="3">
    <location>
        <begin position="64"/>
        <end position="171"/>
    </location>
</feature>
<feature type="compositionally biased region" description="Pro residues" evidence="4">
    <location>
        <begin position="10"/>
        <end position="21"/>
    </location>
</feature>
<feature type="compositionally biased region" description="Acidic residues" evidence="4">
    <location>
        <begin position="23"/>
        <end position="37"/>
    </location>
</feature>
<feature type="compositionally biased region" description="Acidic residues" evidence="4">
    <location>
        <begin position="45"/>
        <end position="54"/>
    </location>
</feature>
<feature type="modified residue" description="N-acetylserine" evidence="2">
    <location>
        <position position="2"/>
    </location>
</feature>
<feature type="modified residue" description="Phosphoserine" evidence="2">
    <location>
        <position position="32"/>
    </location>
</feature>
<feature type="modified residue" description="Phosphoserine" evidence="2">
    <location>
        <position position="45"/>
    </location>
</feature>
<feature type="modified residue" description="Phosphothreonine" evidence="2">
    <location>
        <position position="49"/>
    </location>
</feature>
<feature type="modified residue" description="Phosphoserine" evidence="2">
    <location>
        <position position="53"/>
    </location>
</feature>
<feature type="modified residue" description="Phosphoserine" evidence="2">
    <location>
        <position position="228"/>
    </location>
</feature>
<feature type="modified residue" description="Phosphoserine" evidence="2">
    <location>
        <position position="234"/>
    </location>
</feature>
<feature type="modified residue" description="Phosphoserine" evidence="2">
    <location>
        <position position="237"/>
    </location>
</feature>
<feature type="modified residue" description="Phosphothreonine" evidence="2">
    <location>
        <position position="244"/>
    </location>
</feature>
<feature type="cross-link" description="Glycyl lysine isopeptide (Lys-Gly) (interchain with G-Cter in SUMO2)" evidence="2">
    <location>
        <position position="69"/>
    </location>
</feature>
<feature type="cross-link" description="Glycyl lysine isopeptide (Lys-Gly) (interchain with G-Cter in SUMO2)" evidence="2">
    <location>
        <position position="178"/>
    </location>
</feature>
<feature type="cross-link" description="Glycyl lysine isopeptide (Lys-Gly) (interchain with G-Cter in SUMO2)" evidence="2">
    <location>
        <position position="201"/>
    </location>
</feature>
<gene>
    <name type="primary">SUDS3</name>
    <name type="synonym">SDS3</name>
</gene>
<reference key="1">
    <citation type="submission" date="2007-06" db="EMBL/GenBank/DDBJ databases">
        <authorList>
            <consortium name="NIH - Mammalian Gene Collection (MGC) project"/>
        </authorList>
    </citation>
    <scope>NUCLEOTIDE SEQUENCE [LARGE SCALE MRNA]</scope>
    <source>
        <strain>Crossbred X Angus</strain>
        <tissue>Liver</tissue>
    </source>
</reference>
<protein>
    <recommendedName>
        <fullName>Sin3 histone deacetylase corepressor complex component SDS3</fullName>
    </recommendedName>
    <alternativeName>
        <fullName>Suppressor of defective silencing 3 protein homolog</fullName>
    </alternativeName>
</protein>
<name>SDS3_BOVIN</name>
<comment type="function">
    <text evidence="2">Regulatory protein which represses transcription and augments histone deacetylase activity of HDAC1. May have a potential role in tumor suppressor pathways through regulation of apoptosis. May function in the assembly and/or enzymatic activity of the mSin3A corepressor complex or in mediating interactions between the complex and other regulatory complexes (By similarity).</text>
</comment>
<comment type="subunit">
    <text evidence="2">Homodimer. Component of the SIN3 histone deacetylase (HDAC) corepressor complex. Interacts with SIN3A. Interaction with SIN3B enhances the interaction between SIN3B and HDAC1 to form a complex. Interacts with HCFC1. Component of a mSin3A corepressor complex that contains SIN3A, SAP130, SUDS3/SAP45, ARID4B/SAP180, HDAC1 and HDAC2. Interacts with USP17L2; the interaction is direct (By similarity). Interacts with FOXK2 (By similarity).</text>
</comment>
<comment type="subcellular location">
    <subcellularLocation>
        <location evidence="2">Nucleus</location>
    </subcellularLocation>
</comment>
<comment type="domain">
    <text evidence="2">The C-terminus is involved in transcriptional repression by HDAC-independent mechanisms.</text>
</comment>
<comment type="PTM">
    <text evidence="2">Polyubiquitinated. 'Lys-63'-polyubiquitinated SUDS3 positively regulates histone deacetylation. Regulated through deubiquitination by USP17L2/USP17 that cleaves 'Lys-63'-linked ubiquitin chains (By similarity).</text>
</comment>
<comment type="similarity">
    <text evidence="5">Belongs to the SDS3 family.</text>
</comment>
<organism>
    <name type="scientific">Bos taurus</name>
    <name type="common">Bovine</name>
    <dbReference type="NCBI Taxonomy" id="9913"/>
    <lineage>
        <taxon>Eukaryota</taxon>
        <taxon>Metazoa</taxon>
        <taxon>Chordata</taxon>
        <taxon>Craniata</taxon>
        <taxon>Vertebrata</taxon>
        <taxon>Euteleostomi</taxon>
        <taxon>Mammalia</taxon>
        <taxon>Eutheria</taxon>
        <taxon>Laurasiatheria</taxon>
        <taxon>Artiodactyla</taxon>
        <taxon>Ruminantia</taxon>
        <taxon>Pecora</taxon>
        <taxon>Bovidae</taxon>
        <taxon>Bovinae</taxon>
        <taxon>Bos</taxon>
    </lineage>
</organism>
<evidence type="ECO:0000250" key="1"/>
<evidence type="ECO:0000250" key="2">
    <source>
        <dbReference type="UniProtKB" id="Q9H7L9"/>
    </source>
</evidence>
<evidence type="ECO:0000255" key="3"/>
<evidence type="ECO:0000256" key="4">
    <source>
        <dbReference type="SAM" id="MobiDB-lite"/>
    </source>
</evidence>
<evidence type="ECO:0000305" key="5"/>
<accession>A6H6W9</accession>